<reference key="1">
    <citation type="journal article" date="2001" name="Genome Res.">
        <title>The complete genome sequence of the lactic acid bacterium Lactococcus lactis ssp. lactis IL1403.</title>
        <authorList>
            <person name="Bolotin A."/>
            <person name="Wincker P."/>
            <person name="Mauger S."/>
            <person name="Jaillon O."/>
            <person name="Malarme K."/>
            <person name="Weissenbach J."/>
            <person name="Ehrlich S.D."/>
            <person name="Sorokin A."/>
        </authorList>
    </citation>
    <scope>NUCLEOTIDE SEQUENCE [LARGE SCALE GENOMIC DNA]</scope>
    <source>
        <strain>IL1403</strain>
    </source>
</reference>
<evidence type="ECO:0000255" key="1">
    <source>
        <dbReference type="HAMAP-Rule" id="MF_00583"/>
    </source>
</evidence>
<gene>
    <name evidence="1" type="primary">prs2</name>
    <name type="synonym">prsB</name>
    <name type="ordered locus">LL1857</name>
    <name type="ORF">L109335</name>
</gene>
<feature type="chain" id="PRO_0000141147" description="Putative ribose-phosphate pyrophosphokinase 2">
    <location>
        <begin position="1"/>
        <end position="321"/>
    </location>
</feature>
<feature type="binding site" evidence="1">
    <location>
        <begin position="41"/>
        <end position="43"/>
    </location>
    <ligand>
        <name>ATP</name>
        <dbReference type="ChEBI" id="CHEBI:30616"/>
    </ligand>
</feature>
<feature type="binding site" evidence="1">
    <location>
        <begin position="100"/>
        <end position="101"/>
    </location>
    <ligand>
        <name>ATP</name>
        <dbReference type="ChEBI" id="CHEBI:30616"/>
    </ligand>
</feature>
<feature type="binding site" evidence="1">
    <location>
        <position position="134"/>
    </location>
    <ligand>
        <name>Mg(2+)</name>
        <dbReference type="ChEBI" id="CHEBI:18420"/>
    </ligand>
</feature>
<feature type="binding site" evidence="1">
    <location>
        <position position="223"/>
    </location>
    <ligand>
        <name>D-ribose 5-phosphate</name>
        <dbReference type="ChEBI" id="CHEBI:78346"/>
    </ligand>
</feature>
<feature type="binding site" evidence="1">
    <location>
        <begin position="227"/>
        <end position="231"/>
    </location>
    <ligand>
        <name>D-ribose 5-phosphate</name>
        <dbReference type="ChEBI" id="CHEBI:78346"/>
    </ligand>
</feature>
<name>KPRS2_LACLA</name>
<dbReference type="EC" id="2.7.6.1" evidence="1"/>
<dbReference type="EMBL" id="AE005176">
    <property type="protein sequence ID" value="AAK05955.1"/>
    <property type="molecule type" value="Genomic_DNA"/>
</dbReference>
<dbReference type="PIR" id="A86857">
    <property type="entry name" value="A86857"/>
</dbReference>
<dbReference type="RefSeq" id="NP_268014.1">
    <property type="nucleotide sequence ID" value="NC_002662.1"/>
</dbReference>
<dbReference type="RefSeq" id="WP_003132369.1">
    <property type="nucleotide sequence ID" value="NC_002662.1"/>
</dbReference>
<dbReference type="SMR" id="Q9CEI4"/>
<dbReference type="PaxDb" id="272623-L109335"/>
<dbReference type="EnsemblBacteria" id="AAK05955">
    <property type="protein sequence ID" value="AAK05955"/>
    <property type="gene ID" value="L109335"/>
</dbReference>
<dbReference type="KEGG" id="lla:L109335"/>
<dbReference type="PATRIC" id="fig|272623.7.peg.1989"/>
<dbReference type="eggNOG" id="COG0462">
    <property type="taxonomic scope" value="Bacteria"/>
</dbReference>
<dbReference type="HOGENOM" id="CLU_033546_1_0_9"/>
<dbReference type="OrthoDB" id="9777067at2"/>
<dbReference type="UniPathway" id="UPA00087">
    <property type="reaction ID" value="UER00172"/>
</dbReference>
<dbReference type="Proteomes" id="UP000002196">
    <property type="component" value="Chromosome"/>
</dbReference>
<dbReference type="GO" id="GO:0005737">
    <property type="term" value="C:cytoplasm"/>
    <property type="evidence" value="ECO:0007669"/>
    <property type="project" value="UniProtKB-SubCell"/>
</dbReference>
<dbReference type="GO" id="GO:0002189">
    <property type="term" value="C:ribose phosphate diphosphokinase complex"/>
    <property type="evidence" value="ECO:0007669"/>
    <property type="project" value="TreeGrafter"/>
</dbReference>
<dbReference type="GO" id="GO:0005524">
    <property type="term" value="F:ATP binding"/>
    <property type="evidence" value="ECO:0007669"/>
    <property type="project" value="UniProtKB-KW"/>
</dbReference>
<dbReference type="GO" id="GO:0016301">
    <property type="term" value="F:kinase activity"/>
    <property type="evidence" value="ECO:0007669"/>
    <property type="project" value="UniProtKB-KW"/>
</dbReference>
<dbReference type="GO" id="GO:0000287">
    <property type="term" value="F:magnesium ion binding"/>
    <property type="evidence" value="ECO:0007669"/>
    <property type="project" value="UniProtKB-UniRule"/>
</dbReference>
<dbReference type="GO" id="GO:0004749">
    <property type="term" value="F:ribose phosphate diphosphokinase activity"/>
    <property type="evidence" value="ECO:0007669"/>
    <property type="project" value="UniProtKB-UniRule"/>
</dbReference>
<dbReference type="GO" id="GO:0006015">
    <property type="term" value="P:5-phosphoribose 1-diphosphate biosynthetic process"/>
    <property type="evidence" value="ECO:0007669"/>
    <property type="project" value="UniProtKB-UniRule"/>
</dbReference>
<dbReference type="GO" id="GO:0006164">
    <property type="term" value="P:purine nucleotide biosynthetic process"/>
    <property type="evidence" value="ECO:0007669"/>
    <property type="project" value="TreeGrafter"/>
</dbReference>
<dbReference type="GO" id="GO:0009156">
    <property type="term" value="P:ribonucleoside monophosphate biosynthetic process"/>
    <property type="evidence" value="ECO:0007669"/>
    <property type="project" value="InterPro"/>
</dbReference>
<dbReference type="CDD" id="cd06223">
    <property type="entry name" value="PRTases_typeI"/>
    <property type="match status" value="1"/>
</dbReference>
<dbReference type="FunFam" id="3.40.50.2020:FF:000001">
    <property type="entry name" value="Ribose-phosphate pyrophosphokinase"/>
    <property type="match status" value="1"/>
</dbReference>
<dbReference type="Gene3D" id="3.40.50.2020">
    <property type="match status" value="2"/>
</dbReference>
<dbReference type="HAMAP" id="MF_00583_B">
    <property type="entry name" value="RibP_PPkinase_B"/>
    <property type="match status" value="1"/>
</dbReference>
<dbReference type="InterPro" id="IPR000842">
    <property type="entry name" value="PRib_PP_synth_CS"/>
</dbReference>
<dbReference type="InterPro" id="IPR029099">
    <property type="entry name" value="Pribosyltran_N"/>
</dbReference>
<dbReference type="InterPro" id="IPR000836">
    <property type="entry name" value="PRibTrfase_dom"/>
</dbReference>
<dbReference type="InterPro" id="IPR029057">
    <property type="entry name" value="PRTase-like"/>
</dbReference>
<dbReference type="InterPro" id="IPR005946">
    <property type="entry name" value="Rib-P_diPkinase"/>
</dbReference>
<dbReference type="InterPro" id="IPR037515">
    <property type="entry name" value="Rib-P_diPkinase_bac"/>
</dbReference>
<dbReference type="NCBIfam" id="NF002320">
    <property type="entry name" value="PRK01259.1"/>
    <property type="match status" value="1"/>
</dbReference>
<dbReference type="NCBIfam" id="NF002686">
    <property type="entry name" value="PRK02458.1"/>
    <property type="match status" value="1"/>
</dbReference>
<dbReference type="NCBIfam" id="TIGR01251">
    <property type="entry name" value="ribP_PPkin"/>
    <property type="match status" value="1"/>
</dbReference>
<dbReference type="PANTHER" id="PTHR10210">
    <property type="entry name" value="RIBOSE-PHOSPHATE DIPHOSPHOKINASE FAMILY MEMBER"/>
    <property type="match status" value="1"/>
</dbReference>
<dbReference type="PANTHER" id="PTHR10210:SF41">
    <property type="entry name" value="RIBOSE-PHOSPHATE PYROPHOSPHOKINASE 1, CHLOROPLASTIC"/>
    <property type="match status" value="1"/>
</dbReference>
<dbReference type="Pfam" id="PF14572">
    <property type="entry name" value="Pribosyl_synth"/>
    <property type="match status" value="1"/>
</dbReference>
<dbReference type="Pfam" id="PF13793">
    <property type="entry name" value="Pribosyltran_N"/>
    <property type="match status" value="1"/>
</dbReference>
<dbReference type="SMART" id="SM01400">
    <property type="entry name" value="Pribosyltran_N"/>
    <property type="match status" value="1"/>
</dbReference>
<dbReference type="SUPFAM" id="SSF53271">
    <property type="entry name" value="PRTase-like"/>
    <property type="match status" value="2"/>
</dbReference>
<dbReference type="PROSITE" id="PS00114">
    <property type="entry name" value="PRPP_SYNTHASE"/>
    <property type="match status" value="1"/>
</dbReference>
<organism>
    <name type="scientific">Lactococcus lactis subsp. lactis (strain IL1403)</name>
    <name type="common">Streptococcus lactis</name>
    <dbReference type="NCBI Taxonomy" id="272623"/>
    <lineage>
        <taxon>Bacteria</taxon>
        <taxon>Bacillati</taxon>
        <taxon>Bacillota</taxon>
        <taxon>Bacilli</taxon>
        <taxon>Lactobacillales</taxon>
        <taxon>Streptococcaceae</taxon>
        <taxon>Lactococcus</taxon>
    </lineage>
</organism>
<proteinExistence type="inferred from homology"/>
<keyword id="KW-0067">ATP-binding</keyword>
<keyword id="KW-0963">Cytoplasm</keyword>
<keyword id="KW-0418">Kinase</keyword>
<keyword id="KW-0460">Magnesium</keyword>
<keyword id="KW-0479">Metal-binding</keyword>
<keyword id="KW-0545">Nucleotide biosynthesis</keyword>
<keyword id="KW-0547">Nucleotide-binding</keyword>
<keyword id="KW-1185">Reference proteome</keyword>
<keyword id="KW-0808">Transferase</keyword>
<protein>
    <recommendedName>
        <fullName evidence="1">Putative ribose-phosphate pyrophosphokinase 2</fullName>
        <shortName evidence="1">RPPK 2</shortName>
        <ecNumber evidence="1">2.7.6.1</ecNumber>
    </recommendedName>
    <alternativeName>
        <fullName evidence="1">5-phospho-D-ribosyl alpha-1-diphosphate synthase 2</fullName>
    </alternativeName>
    <alternativeName>
        <fullName evidence="1">Phosphoribosyl diphosphate synthase 2</fullName>
    </alternativeName>
    <alternativeName>
        <fullName evidence="1">Phosphoribosyl pyrophosphate synthase 2</fullName>
        <shortName evidence="1">P-Rib-PP synthase 2</shortName>
        <shortName evidence="1">PRPP synthase 2</shortName>
        <shortName evidence="1">PRPPase 2</shortName>
    </alternativeName>
</protein>
<accession>Q9CEI4</accession>
<sequence>MVYSDSHLKLFALNSNPGLAEKISQFTGVPLGKLSSKQFSDGEIMINMEESVRSQDIFIVQSTSCPVNDHLWELLIMIDACKRASARTINVVIPYFGYARQDRTATSREPITAKLVADMIVKAGADRLLTLDIHAVQVQGFFDIPVDNLFTVPLFADYYRKSGLFGDDVIVVAPKNSGIKRARSLAEYLESAIAIVDYEDDDKNRENGYVIGNVSGKKVILIDDILNTGVTFANAANVVREAGASEIYAVASHGLFTSGAADVLEKVDIKEILVTDSVVTNHRKPLNVKYLSAAEYLASAILRIHEGRPVSPLFEHEKPQD</sequence>
<comment type="function">
    <text evidence="1">Involved in the biosynthesis of the central metabolite phospho-alpha-D-ribosyl-1-pyrophosphate (PRPP) via the transfer of pyrophosphoryl group from ATP to 1-hydroxyl of ribose-5-phosphate (Rib-5-P).</text>
</comment>
<comment type="catalytic activity">
    <reaction evidence="1">
        <text>D-ribose 5-phosphate + ATP = 5-phospho-alpha-D-ribose 1-diphosphate + AMP + H(+)</text>
        <dbReference type="Rhea" id="RHEA:15609"/>
        <dbReference type="ChEBI" id="CHEBI:15378"/>
        <dbReference type="ChEBI" id="CHEBI:30616"/>
        <dbReference type="ChEBI" id="CHEBI:58017"/>
        <dbReference type="ChEBI" id="CHEBI:78346"/>
        <dbReference type="ChEBI" id="CHEBI:456215"/>
        <dbReference type="EC" id="2.7.6.1"/>
    </reaction>
</comment>
<comment type="cofactor">
    <cofactor evidence="1">
        <name>Mg(2+)</name>
        <dbReference type="ChEBI" id="CHEBI:18420"/>
    </cofactor>
    <text evidence="1">Binds 1 Mg(2+) ion per subunit.</text>
</comment>
<comment type="pathway">
    <text evidence="1">Metabolic intermediate biosynthesis; 5-phospho-alpha-D-ribose 1-diphosphate biosynthesis; 5-phospho-alpha-D-ribose 1-diphosphate from D-ribose 5-phosphate (route I): step 1/1.</text>
</comment>
<comment type="subunit">
    <text evidence="1">Homohexamer.</text>
</comment>
<comment type="subcellular location">
    <subcellularLocation>
        <location evidence="1">Cytoplasm</location>
    </subcellularLocation>
</comment>
<comment type="similarity">
    <text evidence="1">Belongs to the ribose-phosphate pyrophosphokinase family. Class I subfamily.</text>
</comment>
<comment type="caution">
    <text evidence="1">Part of a set of proteins in which some residues (ACT_SITE, NP_BIND, REGION and BINDING) are not conserved.</text>
</comment>